<protein>
    <recommendedName>
        <fullName>[Pyruvate dehydrogenase (acetyl-transferring)] kinase isozyme 4, mitochondrial</fullName>
        <ecNumber>2.7.11.2</ecNumber>
    </recommendedName>
    <alternativeName>
        <fullName>Pyruvate dehydrogenase kinase isoform 4</fullName>
    </alternativeName>
</protein>
<gene>
    <name type="primary">PDK4</name>
    <name type="synonym">PDHK4</name>
</gene>
<accession>Q16654</accession>
<feature type="transit peptide" description="Mitochondrion" evidence="1">
    <location>
        <begin position="1"/>
        <end status="unknown"/>
    </location>
</feature>
<feature type="chain" id="PRO_0000023445" description="[Pyruvate dehydrogenase (acetyl-transferring)] kinase isozyme 4, mitochondrial">
    <location>
        <begin status="unknown"/>
        <end position="411"/>
    </location>
</feature>
<feature type="domain" description="Histidine kinase" evidence="2">
    <location>
        <begin position="138"/>
        <end position="368"/>
    </location>
</feature>
<feature type="binding site" evidence="7">
    <location>
        <begin position="254"/>
        <end position="261"/>
    </location>
    <ligand>
        <name>ATP</name>
        <dbReference type="ChEBI" id="CHEBI:30616"/>
    </ligand>
</feature>
<feature type="binding site" evidence="7">
    <location>
        <position position="293"/>
    </location>
    <ligand>
        <name>ATP</name>
        <dbReference type="ChEBI" id="CHEBI:30616"/>
    </ligand>
</feature>
<feature type="binding site" evidence="7">
    <location>
        <begin position="312"/>
        <end position="313"/>
    </location>
    <ligand>
        <name>ATP</name>
        <dbReference type="ChEBI" id="CHEBI:30616"/>
    </ligand>
</feature>
<feature type="binding site" evidence="7">
    <location>
        <begin position="329"/>
        <end position="334"/>
    </location>
    <ligand>
        <name>ATP</name>
        <dbReference type="ChEBI" id="CHEBI:30616"/>
    </ligand>
</feature>
<feature type="site" description="Interaction with the other subunit in the homodimer">
    <location>
        <position position="157"/>
    </location>
</feature>
<feature type="site" description="Interaction with the other subunit in the homodimer">
    <location>
        <position position="161"/>
    </location>
</feature>
<feature type="site" description="Interaction with the other subunit in the homodimer">
    <location>
        <position position="395"/>
    </location>
</feature>
<feature type="sequence variant" id="VAR_042298" description="In dbSNP:rs56391840." evidence="5">
    <original>A</original>
    <variation>V</variation>
    <location>
        <position position="17"/>
    </location>
</feature>
<feature type="sequence variant" id="VAR_042299" description="In dbSNP:rs55761955." evidence="5">
    <original>L</original>
    <variation>M</variation>
    <location>
        <position position="19"/>
    </location>
</feature>
<feature type="sequence variant" id="VAR_042300" description="In dbSNP:rs34898343." evidence="5">
    <original>D</original>
    <variation>G</variation>
    <location>
        <position position="109"/>
    </location>
</feature>
<feature type="mutagenesis site" description="Loss of activity." evidence="7">
    <original>Y</original>
    <variation>F</variation>
    <location>
        <position position="157"/>
    </location>
</feature>
<feature type="mutagenesis site" description="Loss of activity." evidence="7">
    <original>R</original>
    <variation>A</variation>
    <location>
        <position position="161"/>
    </location>
</feature>
<feature type="mutagenesis site" description="Loss of activity; when associated with A-395." evidence="7">
    <original>D</original>
    <variation>A</variation>
    <location>
        <position position="394"/>
    </location>
</feature>
<feature type="mutagenesis site" description="Loss of activity; when associated with A-394." evidence="7">
    <original>W</original>
    <variation>A</variation>
    <location>
        <position position="395"/>
    </location>
</feature>
<feature type="helix" evidence="13">
    <location>
        <begin position="22"/>
        <end position="27"/>
    </location>
</feature>
<feature type="helix" evidence="13">
    <location>
        <begin position="37"/>
        <end position="42"/>
    </location>
</feature>
<feature type="turn" evidence="14">
    <location>
        <begin position="45"/>
        <end position="47"/>
    </location>
</feature>
<feature type="helix" evidence="13">
    <location>
        <begin position="50"/>
        <end position="72"/>
    </location>
</feature>
<feature type="helix" evidence="13">
    <location>
        <begin position="77"/>
        <end position="80"/>
    </location>
</feature>
<feature type="helix" evidence="13">
    <location>
        <begin position="83"/>
        <end position="100"/>
    </location>
</feature>
<feature type="strand" evidence="13">
    <location>
        <begin position="103"/>
        <end position="105"/>
    </location>
</feature>
<feature type="helix" evidence="13">
    <location>
        <begin position="110"/>
        <end position="127"/>
    </location>
</feature>
<feature type="helix" evidence="13">
    <location>
        <begin position="130"/>
        <end position="142"/>
    </location>
</feature>
<feature type="turn" evidence="13">
    <location>
        <begin position="149"/>
        <end position="151"/>
    </location>
</feature>
<feature type="helix" evidence="13">
    <location>
        <begin position="153"/>
        <end position="180"/>
    </location>
</feature>
<feature type="strand" evidence="13">
    <location>
        <begin position="194"/>
        <end position="199"/>
    </location>
</feature>
<feature type="helix" evidence="13">
    <location>
        <begin position="200"/>
        <end position="219"/>
    </location>
</feature>
<feature type="strand" evidence="13">
    <location>
        <begin position="225"/>
        <end position="234"/>
    </location>
</feature>
<feature type="strand" evidence="13">
    <location>
        <begin position="240"/>
        <end position="243"/>
    </location>
</feature>
<feature type="helix" evidence="13">
    <location>
        <begin position="245"/>
        <end position="266"/>
    </location>
</feature>
<feature type="turn" evidence="13">
    <location>
        <begin position="267"/>
        <end position="269"/>
    </location>
</feature>
<feature type="strand" evidence="13">
    <location>
        <begin position="270"/>
        <end position="272"/>
    </location>
</feature>
<feature type="strand" evidence="13">
    <location>
        <begin position="276"/>
        <end position="282"/>
    </location>
</feature>
<feature type="strand" evidence="13">
    <location>
        <begin position="284"/>
        <end position="293"/>
    </location>
</feature>
<feature type="helix" evidence="13">
    <location>
        <begin position="300"/>
        <end position="302"/>
    </location>
</feature>
<feature type="helix" evidence="13">
    <location>
        <begin position="303"/>
        <end position="306"/>
    </location>
</feature>
<feature type="strand" evidence="15">
    <location>
        <begin position="328"/>
        <end position="330"/>
    </location>
</feature>
<feature type="helix" evidence="13">
    <location>
        <begin position="333"/>
        <end position="343"/>
    </location>
</feature>
<feature type="strand" evidence="13">
    <location>
        <begin position="347"/>
        <end position="353"/>
    </location>
</feature>
<feature type="turn" evidence="13">
    <location>
        <begin position="354"/>
        <end position="356"/>
    </location>
</feature>
<feature type="strand" evidence="13">
    <location>
        <begin position="357"/>
        <end position="367"/>
    </location>
</feature>
<feature type="turn" evidence="13">
    <location>
        <begin position="368"/>
        <end position="370"/>
    </location>
</feature>
<feature type="helix" evidence="13">
    <location>
        <begin position="380"/>
        <end position="385"/>
    </location>
</feature>
<proteinExistence type="evidence at protein level"/>
<keyword id="KW-0002">3D-structure</keyword>
<keyword id="KW-0067">ATP-binding</keyword>
<keyword id="KW-0418">Kinase</keyword>
<keyword id="KW-0496">Mitochondrion</keyword>
<keyword id="KW-0547">Nucleotide-binding</keyword>
<keyword id="KW-1267">Proteomics identification</keyword>
<keyword id="KW-1185">Reference proteome</keyword>
<keyword id="KW-0808">Transferase</keyword>
<keyword id="KW-0809">Transit peptide</keyword>
<evidence type="ECO:0000255" key="1"/>
<evidence type="ECO:0000255" key="2">
    <source>
        <dbReference type="PROSITE-ProRule" id="PRU00107"/>
    </source>
</evidence>
<evidence type="ECO:0000269" key="3">
    <source>
    </source>
</evidence>
<evidence type="ECO:0000269" key="4">
    <source>
    </source>
</evidence>
<evidence type="ECO:0000269" key="5">
    <source>
    </source>
</evidence>
<evidence type="ECO:0000269" key="6">
    <source>
    </source>
</evidence>
<evidence type="ECO:0000269" key="7">
    <source>
    </source>
</evidence>
<evidence type="ECO:0000269" key="8">
    <source>
    </source>
</evidence>
<evidence type="ECO:0000269" key="9">
    <source>
    </source>
</evidence>
<evidence type="ECO:0000269" key="10">
    <source>
    </source>
</evidence>
<evidence type="ECO:0000269" key="11">
    <source>
    </source>
</evidence>
<evidence type="ECO:0000305" key="12"/>
<evidence type="ECO:0007829" key="13">
    <source>
        <dbReference type="PDB" id="2E0A"/>
    </source>
</evidence>
<evidence type="ECO:0007829" key="14">
    <source>
        <dbReference type="PDB" id="7EBB"/>
    </source>
</evidence>
<evidence type="ECO:0007829" key="15">
    <source>
        <dbReference type="PDB" id="7EBG"/>
    </source>
</evidence>
<name>PDK4_HUMAN</name>
<sequence length="411" mass="46469">MKAARFVLRSAGSLNGAGLVPREVEHFSRYSPSPLSMKQLLDFGSENACERTSFAFLRQELPVRLANILKEIDILPTQLVNTSSVQLVKSWYIQSLMDLVEFHEKSPDDQKALSDFVDTLIKVRNRHHNVVPTMAQGIIEYKDACTVDPVTNQNLQYFLDRFYMNRISTRMLMNQHILIFSDSQTGNPSHIGSIDPNCDVVAVVQDAFECSRMLCDQYYLSSPELKLTQVNGKFPDQPIHIVYVPSHLHHMLFELFKNAMRATVEHQENQPSLTPIEVIVVLGKEDLTIKISDRGGGVPLRIIDRLFSYTYSTAPTPVMDNSRNAPLAGFGYGLPISRLYAKYFQGDLNLYSLSGYGTDAIIYLKALSSESIEKLPVFNKSAFKHYQMSSEADDWCIPSREPKNLAKEVAM</sequence>
<organism>
    <name type="scientific">Homo sapiens</name>
    <name type="common">Human</name>
    <dbReference type="NCBI Taxonomy" id="9606"/>
    <lineage>
        <taxon>Eukaryota</taxon>
        <taxon>Metazoa</taxon>
        <taxon>Chordata</taxon>
        <taxon>Craniata</taxon>
        <taxon>Vertebrata</taxon>
        <taxon>Euteleostomi</taxon>
        <taxon>Mammalia</taxon>
        <taxon>Eutheria</taxon>
        <taxon>Euarchontoglires</taxon>
        <taxon>Primates</taxon>
        <taxon>Haplorrhini</taxon>
        <taxon>Catarrhini</taxon>
        <taxon>Hominidae</taxon>
        <taxon>Homo</taxon>
    </lineage>
</organism>
<reference key="1">
    <citation type="journal article" date="1996" name="J. Biol. Chem.">
        <title>Cloning and characterization of PDK4 on 7q21.3 encoding a fourth pyruvate dehydrogenase kinase isoenzyme in human.</title>
        <authorList>
            <person name="Rowles J."/>
            <person name="Scherer S.W."/>
            <person name="Xi T."/>
            <person name="Majer M."/>
            <person name="Nickle D.C."/>
            <person name="Rommens J.M."/>
            <person name="Popov K.M."/>
            <person name="Harris R.A."/>
            <person name="Riebow N.L."/>
            <person name="Xia J."/>
            <person name="Tsui L.-C."/>
            <person name="Bogardus C."/>
            <person name="Prochazka M."/>
        </authorList>
    </citation>
    <scope>NUCLEOTIDE SEQUENCE [GENOMIC DNA / MRNA]</scope>
</reference>
<reference key="2">
    <citation type="journal article" date="2003" name="Nature">
        <title>The DNA sequence of human chromosome 7.</title>
        <authorList>
            <person name="Hillier L.W."/>
            <person name="Fulton R.S."/>
            <person name="Fulton L.A."/>
            <person name="Graves T.A."/>
            <person name="Pepin K.H."/>
            <person name="Wagner-McPherson C."/>
            <person name="Layman D."/>
            <person name="Maas J."/>
            <person name="Jaeger S."/>
            <person name="Walker R."/>
            <person name="Wylie K."/>
            <person name="Sekhon M."/>
            <person name="Becker M.C."/>
            <person name="O'Laughlin M.D."/>
            <person name="Schaller M.E."/>
            <person name="Fewell G.A."/>
            <person name="Delehaunty K.D."/>
            <person name="Miner T.L."/>
            <person name="Nash W.E."/>
            <person name="Cordes M."/>
            <person name="Du H."/>
            <person name="Sun H."/>
            <person name="Edwards J."/>
            <person name="Bradshaw-Cordum H."/>
            <person name="Ali J."/>
            <person name="Andrews S."/>
            <person name="Isak A."/>
            <person name="Vanbrunt A."/>
            <person name="Nguyen C."/>
            <person name="Du F."/>
            <person name="Lamar B."/>
            <person name="Courtney L."/>
            <person name="Kalicki J."/>
            <person name="Ozersky P."/>
            <person name="Bielicki L."/>
            <person name="Scott K."/>
            <person name="Holmes A."/>
            <person name="Harkins R."/>
            <person name="Harris A."/>
            <person name="Strong C.M."/>
            <person name="Hou S."/>
            <person name="Tomlinson C."/>
            <person name="Dauphin-Kohlberg S."/>
            <person name="Kozlowicz-Reilly A."/>
            <person name="Leonard S."/>
            <person name="Rohlfing T."/>
            <person name="Rock S.M."/>
            <person name="Tin-Wollam A.-M."/>
            <person name="Abbott A."/>
            <person name="Minx P."/>
            <person name="Maupin R."/>
            <person name="Strowmatt C."/>
            <person name="Latreille P."/>
            <person name="Miller N."/>
            <person name="Johnson D."/>
            <person name="Murray J."/>
            <person name="Woessner J.P."/>
            <person name="Wendl M.C."/>
            <person name="Yang S.-P."/>
            <person name="Schultz B.R."/>
            <person name="Wallis J.W."/>
            <person name="Spieth J."/>
            <person name="Bieri T.A."/>
            <person name="Nelson J.O."/>
            <person name="Berkowicz N."/>
            <person name="Wohldmann P.E."/>
            <person name="Cook L.L."/>
            <person name="Hickenbotham M.T."/>
            <person name="Eldred J."/>
            <person name="Williams D."/>
            <person name="Bedell J.A."/>
            <person name="Mardis E.R."/>
            <person name="Clifton S.W."/>
            <person name="Chissoe S.L."/>
            <person name="Marra M.A."/>
            <person name="Raymond C."/>
            <person name="Haugen E."/>
            <person name="Gillett W."/>
            <person name="Zhou Y."/>
            <person name="James R."/>
            <person name="Phelps K."/>
            <person name="Iadanoto S."/>
            <person name="Bubb K."/>
            <person name="Simms E."/>
            <person name="Levy R."/>
            <person name="Clendenning J."/>
            <person name="Kaul R."/>
            <person name="Kent W.J."/>
            <person name="Furey T.S."/>
            <person name="Baertsch R.A."/>
            <person name="Brent M.R."/>
            <person name="Keibler E."/>
            <person name="Flicek P."/>
            <person name="Bork P."/>
            <person name="Suyama M."/>
            <person name="Bailey J.A."/>
            <person name="Portnoy M.E."/>
            <person name="Torrents D."/>
            <person name="Chinwalla A.T."/>
            <person name="Gish W.R."/>
            <person name="Eddy S.R."/>
            <person name="McPherson J.D."/>
            <person name="Olson M.V."/>
            <person name="Eichler E.E."/>
            <person name="Green E.D."/>
            <person name="Waterston R.H."/>
            <person name="Wilson R.K."/>
        </authorList>
    </citation>
    <scope>NUCLEOTIDE SEQUENCE [LARGE SCALE GENOMIC DNA]</scope>
</reference>
<reference key="3">
    <citation type="journal article" date="2004" name="Genome Res.">
        <title>The status, quality, and expansion of the NIH full-length cDNA project: the Mammalian Gene Collection (MGC).</title>
        <authorList>
            <consortium name="The MGC Project Team"/>
        </authorList>
    </citation>
    <scope>NUCLEOTIDE SEQUENCE [LARGE SCALE MRNA]</scope>
    <source>
        <tissue>Cervix</tissue>
    </source>
</reference>
<reference key="4">
    <citation type="journal article" date="2004" name="J. Appl. Physiol.">
        <title>Pyruvate dehydrogenase activation and kinase expression in human skeletal muscle during fasting.</title>
        <authorList>
            <person name="Spriet L.L."/>
            <person name="Tunstall R.J."/>
            <person name="Watt M.J."/>
            <person name="Mehan K.A."/>
            <person name="Hargreaves M."/>
            <person name="Cameron-Smith D."/>
        </authorList>
    </citation>
    <scope>TISSUE SPECIFICITY</scope>
    <scope>INDUCTION</scope>
</reference>
<reference key="5">
    <citation type="journal article" date="2005" name="FEBS J.">
        <title>Diverging regulation of pyruvate dehydrogenase kinase isoform gene expression in cultured human muscle cells.</title>
        <authorList>
            <person name="Abbot E.L."/>
            <person name="McCormack J.G."/>
            <person name="Reynet C."/>
            <person name="Hassall D.G."/>
            <person name="Buchan K.W."/>
            <person name="Yeaman S.J."/>
        </authorList>
    </citation>
    <scope>FUNCTION</scope>
    <scope>INDUCTION</scope>
</reference>
<reference key="6">
    <citation type="journal article" date="2007" name="J. Mol. Biol.">
        <title>Three members of the human pyruvate dehydrogenase kinase gene family are direct targets of the peroxisome proliferator-activated receptor beta/delta.</title>
        <authorList>
            <person name="Degenhardt T."/>
            <person name="Saramaki A."/>
            <person name="Malinen M."/>
            <person name="Rieck M."/>
            <person name="Vaisanen S."/>
            <person name="Huotari A."/>
            <person name="Herzig K.H."/>
            <person name="Muller R."/>
            <person name="Carlberg C."/>
        </authorList>
    </citation>
    <scope>INDUCTION BY PPARD</scope>
</reference>
<reference key="7">
    <citation type="journal article" date="2011" name="Genes Dev.">
        <title>Erk regulation of pyruvate dehydrogenase flux through PDK4 modulates cell proliferation.</title>
        <authorList>
            <person name="Grassian A.R."/>
            <person name="Metallo C.M."/>
            <person name="Coloff J.L."/>
            <person name="Stephanopoulos G."/>
            <person name="Brugge J.S."/>
        </authorList>
    </citation>
    <scope>FUNCTION</scope>
</reference>
<reference key="8">
    <citation type="journal article" date="2011" name="Int. J. Cancer">
        <title>Butyrate elicits a metabolic switch in human colon cancer cells by targeting the pyruvate dehydrogenase complex.</title>
        <authorList>
            <person name="Blouin J.M."/>
            <person name="Penot G."/>
            <person name="Collinet M."/>
            <person name="Nacfer M."/>
            <person name="Forest C."/>
            <person name="Laurent-Puig P."/>
            <person name="Coumoul X."/>
            <person name="Barouki R."/>
            <person name="Benelli C."/>
            <person name="Bortoli S."/>
        </authorList>
    </citation>
    <scope>INDUCTION</scope>
</reference>
<reference key="9">
    <citation type="journal article" date="2012" name="Metabolism">
        <title>Mitochondrial regulators of fatty acid metabolism reflect metabolic dysfunction in type 2 diabetes mellitus.</title>
        <authorList>
            <person name="Kulkarni S.S."/>
            <person name="Salehzadeh F."/>
            <person name="Fritz T."/>
            <person name="Zierath J.R."/>
            <person name="Krook A."/>
            <person name="Osler M.E."/>
        </authorList>
    </citation>
    <scope>FUNCTION</scope>
    <scope>INDUCTION</scope>
    <scope>TISSUE SPECIFICITY</scope>
</reference>
<reference key="10">
    <citation type="journal article" date="2008" name="J. Biol. Chem.">
        <title>Pyruvate dehydrogenase kinase-4 structures reveal a metastable open conformation fostering robust core-free basal activity.</title>
        <authorList>
            <person name="Wynn R.M."/>
            <person name="Kato M."/>
            <person name="Chuang J.L."/>
            <person name="Tso S.C."/>
            <person name="Li J."/>
            <person name="Chuang D.T."/>
        </authorList>
    </citation>
    <scope>X-RAY CRYSTALLOGRAPHY (2.0 ANGSTROMS) OF 20-411 IN COMPLEX WITH ATP</scope>
    <scope>FUNCTION</scope>
    <scope>ACTIVITY REGULATION</scope>
    <scope>SUBUNIT</scope>
    <scope>MUTAGENESIS OF TYR-157; ARG-161; ASP-394 AND TRP-395</scope>
</reference>
<reference key="11">
    <citation type="journal article" date="2011" name="Acta Crystallogr. D">
        <title>Inhibitor-bound structures of human pyruvate dehydrogenase kinase 4.</title>
        <authorList>
            <person name="Kukimoto-Niino M."/>
            <person name="Tokmakov A."/>
            <person name="Terada T."/>
            <person name="Ohbayashi N."/>
            <person name="Fujimoto T."/>
            <person name="Gomi S."/>
            <person name="Shiromizu I."/>
            <person name="Kawamoto M."/>
            <person name="Matsusue T."/>
            <person name="Shirouzu M."/>
            <person name="Yokoyama S."/>
        </authorList>
    </citation>
    <scope>X-RAY CRYSTALLOGRAPHY (1.86 ANGSTROMS) OF 20-411 IN COMPLEX WITH ATP ANALOG</scope>
    <scope>CATALYTIC ACTIVITY</scope>
    <scope>SUBUNIT</scope>
</reference>
<reference key="12">
    <citation type="journal article" date="2007" name="Nature">
        <title>Patterns of somatic mutation in human cancer genomes.</title>
        <authorList>
            <person name="Greenman C."/>
            <person name="Stephens P."/>
            <person name="Smith R."/>
            <person name="Dalgliesh G.L."/>
            <person name="Hunter C."/>
            <person name="Bignell G."/>
            <person name="Davies H."/>
            <person name="Teague J."/>
            <person name="Butler A."/>
            <person name="Stevens C."/>
            <person name="Edkins S."/>
            <person name="O'Meara S."/>
            <person name="Vastrik I."/>
            <person name="Schmidt E.E."/>
            <person name="Avis T."/>
            <person name="Barthorpe S."/>
            <person name="Bhamra G."/>
            <person name="Buck G."/>
            <person name="Choudhury B."/>
            <person name="Clements J."/>
            <person name="Cole J."/>
            <person name="Dicks E."/>
            <person name="Forbes S."/>
            <person name="Gray K."/>
            <person name="Halliday K."/>
            <person name="Harrison R."/>
            <person name="Hills K."/>
            <person name="Hinton J."/>
            <person name="Jenkinson A."/>
            <person name="Jones D."/>
            <person name="Menzies A."/>
            <person name="Mironenko T."/>
            <person name="Perry J."/>
            <person name="Raine K."/>
            <person name="Richardson D."/>
            <person name="Shepherd R."/>
            <person name="Small A."/>
            <person name="Tofts C."/>
            <person name="Varian J."/>
            <person name="Webb T."/>
            <person name="West S."/>
            <person name="Widaa S."/>
            <person name="Yates A."/>
            <person name="Cahill D.P."/>
            <person name="Louis D.N."/>
            <person name="Goldstraw P."/>
            <person name="Nicholson A.G."/>
            <person name="Brasseur F."/>
            <person name="Looijenga L."/>
            <person name="Weber B.L."/>
            <person name="Chiew Y.-E."/>
            <person name="DeFazio A."/>
            <person name="Greaves M.F."/>
            <person name="Green A.R."/>
            <person name="Campbell P."/>
            <person name="Birney E."/>
            <person name="Easton D.F."/>
            <person name="Chenevix-Trench G."/>
            <person name="Tan M.-H."/>
            <person name="Khoo S.K."/>
            <person name="Teh B.T."/>
            <person name="Yuen S.T."/>
            <person name="Leung S.Y."/>
            <person name="Wooster R."/>
            <person name="Futreal P.A."/>
            <person name="Stratton M.R."/>
        </authorList>
    </citation>
    <scope>VARIANTS [LARGE SCALE ANALYSIS] VAL-17; MET-19 AND GLY-109</scope>
</reference>
<dbReference type="EC" id="2.7.11.2"/>
<dbReference type="EMBL" id="U54628">
    <property type="protein sequence ID" value="AAC50670.1"/>
    <property type="molecule type" value="Genomic_DNA"/>
</dbReference>
<dbReference type="EMBL" id="U54618">
    <property type="protein sequence ID" value="AAC50670.1"/>
    <property type="status" value="JOINED"/>
    <property type="molecule type" value="Genomic_DNA"/>
</dbReference>
<dbReference type="EMBL" id="U54619">
    <property type="protein sequence ID" value="AAC50670.1"/>
    <property type="status" value="JOINED"/>
    <property type="molecule type" value="Genomic_DNA"/>
</dbReference>
<dbReference type="EMBL" id="U54620">
    <property type="protein sequence ID" value="AAC50670.1"/>
    <property type="status" value="JOINED"/>
    <property type="molecule type" value="Genomic_DNA"/>
</dbReference>
<dbReference type="EMBL" id="U54621">
    <property type="protein sequence ID" value="AAC50670.1"/>
    <property type="status" value="JOINED"/>
    <property type="molecule type" value="Genomic_DNA"/>
</dbReference>
<dbReference type="EMBL" id="U54622">
    <property type="protein sequence ID" value="AAC50670.1"/>
    <property type="status" value="JOINED"/>
    <property type="molecule type" value="Genomic_DNA"/>
</dbReference>
<dbReference type="EMBL" id="U54623">
    <property type="protein sequence ID" value="AAC50670.1"/>
    <property type="status" value="JOINED"/>
    <property type="molecule type" value="Genomic_DNA"/>
</dbReference>
<dbReference type="EMBL" id="U54624">
    <property type="protein sequence ID" value="AAC50670.1"/>
    <property type="status" value="JOINED"/>
    <property type="molecule type" value="Genomic_DNA"/>
</dbReference>
<dbReference type="EMBL" id="U54625">
    <property type="protein sequence ID" value="AAC50670.1"/>
    <property type="status" value="JOINED"/>
    <property type="molecule type" value="Genomic_DNA"/>
</dbReference>
<dbReference type="EMBL" id="U54626">
    <property type="protein sequence ID" value="AAC50670.1"/>
    <property type="status" value="JOINED"/>
    <property type="molecule type" value="Genomic_DNA"/>
</dbReference>
<dbReference type="EMBL" id="U54627">
    <property type="protein sequence ID" value="AAC50670.1"/>
    <property type="status" value="JOINED"/>
    <property type="molecule type" value="Genomic_DNA"/>
</dbReference>
<dbReference type="EMBL" id="U54617">
    <property type="protein sequence ID" value="AAC50669.1"/>
    <property type="molecule type" value="mRNA"/>
</dbReference>
<dbReference type="EMBL" id="AC002451">
    <property type="protein sequence ID" value="AAB67048.1"/>
    <property type="molecule type" value="Genomic_DNA"/>
</dbReference>
<dbReference type="EMBL" id="BC040239">
    <property type="protein sequence ID" value="AAH40239.1"/>
    <property type="molecule type" value="mRNA"/>
</dbReference>
<dbReference type="CCDS" id="CCDS5643.1"/>
<dbReference type="RefSeq" id="NP_002603.1">
    <property type="nucleotide sequence ID" value="NM_002612.4"/>
</dbReference>
<dbReference type="PDB" id="2E0A">
    <property type="method" value="X-ray"/>
    <property type="resolution" value="1.86 A"/>
    <property type="chains" value="A/B=20-411"/>
</dbReference>
<dbReference type="PDB" id="2ZDX">
    <property type="method" value="X-ray"/>
    <property type="resolution" value="2.54 A"/>
    <property type="chains" value="A/B=20-411"/>
</dbReference>
<dbReference type="PDB" id="2ZDY">
    <property type="method" value="X-ray"/>
    <property type="resolution" value="2.40 A"/>
    <property type="chains" value="A/B=20-411"/>
</dbReference>
<dbReference type="PDB" id="2ZKJ">
    <property type="method" value="X-ray"/>
    <property type="resolution" value="2.00 A"/>
    <property type="chains" value="A/B=20-411"/>
</dbReference>
<dbReference type="PDB" id="3D2R">
    <property type="method" value="X-ray"/>
    <property type="resolution" value="2.03 A"/>
    <property type="chains" value="A/B=20-411"/>
</dbReference>
<dbReference type="PDB" id="7EAT">
    <property type="method" value="X-ray"/>
    <property type="resolution" value="2.10 A"/>
    <property type="chains" value="A/B=10-411"/>
</dbReference>
<dbReference type="PDB" id="7EBB">
    <property type="method" value="X-ray"/>
    <property type="resolution" value="1.90 A"/>
    <property type="chains" value="A/B=10-411"/>
</dbReference>
<dbReference type="PDB" id="7EBG">
    <property type="method" value="X-ray"/>
    <property type="resolution" value="1.95 A"/>
    <property type="chains" value="A/B=10-411"/>
</dbReference>
<dbReference type="PDBsum" id="2E0A"/>
<dbReference type="PDBsum" id="2ZDX"/>
<dbReference type="PDBsum" id="2ZDY"/>
<dbReference type="PDBsum" id="2ZKJ"/>
<dbReference type="PDBsum" id="3D2R"/>
<dbReference type="PDBsum" id="7EAT"/>
<dbReference type="PDBsum" id="7EBB"/>
<dbReference type="PDBsum" id="7EBG"/>
<dbReference type="SMR" id="Q16654"/>
<dbReference type="BioGRID" id="111192">
    <property type="interactions" value="55"/>
</dbReference>
<dbReference type="FunCoup" id="Q16654">
    <property type="interactions" value="1337"/>
</dbReference>
<dbReference type="IntAct" id="Q16654">
    <property type="interactions" value="50"/>
</dbReference>
<dbReference type="STRING" id="9606.ENSP00000005178"/>
<dbReference type="BindingDB" id="Q16654"/>
<dbReference type="ChEMBL" id="CHEMBL4141"/>
<dbReference type="DrugBank" id="DB08356">
    <property type="generic name" value="4-[4-(4-methoxyphenyl)-5-methyl-1H-pyrazol-3-yl]benzene-1,3-diol"/>
</dbReference>
<dbReference type="DrugBank" id="DB00755">
    <property type="generic name" value="Tretinoin"/>
</dbReference>
<dbReference type="DrugCentral" id="Q16654"/>
<dbReference type="GuidetoPHARMACOLOGY" id="2144"/>
<dbReference type="GlyGen" id="Q16654">
    <property type="glycosylation" value="1 site"/>
</dbReference>
<dbReference type="iPTMnet" id="Q16654"/>
<dbReference type="PhosphoSitePlus" id="Q16654"/>
<dbReference type="BioMuta" id="PDK4"/>
<dbReference type="DMDM" id="3183120"/>
<dbReference type="jPOST" id="Q16654"/>
<dbReference type="MassIVE" id="Q16654"/>
<dbReference type="PaxDb" id="9606-ENSP00000005178"/>
<dbReference type="PeptideAtlas" id="Q16654"/>
<dbReference type="ProteomicsDB" id="61013"/>
<dbReference type="Pumba" id="Q16654"/>
<dbReference type="Antibodypedia" id="15901">
    <property type="antibodies" value="622 antibodies from 36 providers"/>
</dbReference>
<dbReference type="DNASU" id="5166"/>
<dbReference type="Ensembl" id="ENST00000005178.6">
    <property type="protein sequence ID" value="ENSP00000005178.5"/>
    <property type="gene ID" value="ENSG00000004799.8"/>
</dbReference>
<dbReference type="GeneID" id="5166"/>
<dbReference type="KEGG" id="hsa:5166"/>
<dbReference type="MANE-Select" id="ENST00000005178.6">
    <property type="protein sequence ID" value="ENSP00000005178.5"/>
    <property type="RefSeq nucleotide sequence ID" value="NM_002612.4"/>
    <property type="RefSeq protein sequence ID" value="NP_002603.1"/>
</dbReference>
<dbReference type="UCSC" id="uc003uoa.4">
    <property type="organism name" value="human"/>
</dbReference>
<dbReference type="AGR" id="HGNC:8812"/>
<dbReference type="CTD" id="5166"/>
<dbReference type="DisGeNET" id="5166"/>
<dbReference type="GeneCards" id="PDK4"/>
<dbReference type="HGNC" id="HGNC:8812">
    <property type="gene designation" value="PDK4"/>
</dbReference>
<dbReference type="HPA" id="ENSG00000004799">
    <property type="expression patterns" value="Tissue enhanced (skeletal muscle, tongue)"/>
</dbReference>
<dbReference type="MalaCards" id="PDK4"/>
<dbReference type="MIM" id="602527">
    <property type="type" value="gene"/>
</dbReference>
<dbReference type="neXtProt" id="NX_Q16654"/>
<dbReference type="OpenTargets" id="ENSG00000004799"/>
<dbReference type="PharmGKB" id="PA33157"/>
<dbReference type="VEuPathDB" id="HostDB:ENSG00000004799"/>
<dbReference type="eggNOG" id="KOG0787">
    <property type="taxonomic scope" value="Eukaryota"/>
</dbReference>
<dbReference type="GeneTree" id="ENSGT01030000234646"/>
<dbReference type="HOGENOM" id="CLU_023861_1_1_1"/>
<dbReference type="InParanoid" id="Q16654"/>
<dbReference type="OMA" id="HQENCPS"/>
<dbReference type="OrthoDB" id="241648at2759"/>
<dbReference type="PAN-GO" id="Q16654">
    <property type="GO annotations" value="4 GO annotations based on evolutionary models"/>
</dbReference>
<dbReference type="PhylomeDB" id="Q16654"/>
<dbReference type="TreeFam" id="TF314918"/>
<dbReference type="BRENDA" id="2.7.11.2">
    <property type="organism ID" value="2681"/>
</dbReference>
<dbReference type="PathwayCommons" id="Q16654"/>
<dbReference type="Reactome" id="R-HSA-204174">
    <property type="pathway name" value="Regulation of pyruvate dehydrogenase (PDH) complex"/>
</dbReference>
<dbReference type="Reactome" id="R-HSA-5362517">
    <property type="pathway name" value="Signaling by Retinoic Acid"/>
</dbReference>
<dbReference type="Reactome" id="R-HSA-9841922">
    <property type="pathway name" value="MLL4 and MLL3 complexes regulate expression of PPARG target genes in adipogenesis and hepatic steatosis"/>
</dbReference>
<dbReference type="SignaLink" id="Q16654"/>
<dbReference type="SIGNOR" id="Q16654"/>
<dbReference type="BioGRID-ORCS" id="5166">
    <property type="hits" value="8 hits in 1195 CRISPR screens"/>
</dbReference>
<dbReference type="ChiTaRS" id="PDK4">
    <property type="organism name" value="human"/>
</dbReference>
<dbReference type="EvolutionaryTrace" id="Q16654"/>
<dbReference type="GeneWiki" id="PDK4"/>
<dbReference type="GenomeRNAi" id="5166"/>
<dbReference type="Pharos" id="Q16654">
    <property type="development level" value="Tchem"/>
</dbReference>
<dbReference type="PRO" id="PR:Q16654"/>
<dbReference type="Proteomes" id="UP000005640">
    <property type="component" value="Chromosome 7"/>
</dbReference>
<dbReference type="RNAct" id="Q16654">
    <property type="molecule type" value="protein"/>
</dbReference>
<dbReference type="Bgee" id="ENSG00000004799">
    <property type="expression patterns" value="Expressed in seminal vesicle and 188 other cell types or tissues"/>
</dbReference>
<dbReference type="ExpressionAtlas" id="Q16654">
    <property type="expression patterns" value="baseline and differential"/>
</dbReference>
<dbReference type="GO" id="GO:0005759">
    <property type="term" value="C:mitochondrial matrix"/>
    <property type="evidence" value="ECO:0000304"/>
    <property type="project" value="Reactome"/>
</dbReference>
<dbReference type="GO" id="GO:0005739">
    <property type="term" value="C:mitochondrion"/>
    <property type="evidence" value="ECO:0006056"/>
    <property type="project" value="FlyBase"/>
</dbReference>
<dbReference type="GO" id="GO:0005524">
    <property type="term" value="F:ATP binding"/>
    <property type="evidence" value="ECO:0000314"/>
    <property type="project" value="UniProtKB"/>
</dbReference>
<dbReference type="GO" id="GO:0004672">
    <property type="term" value="F:protein kinase activity"/>
    <property type="evidence" value="ECO:0000314"/>
    <property type="project" value="UniProtKB"/>
</dbReference>
<dbReference type="GO" id="GO:0004740">
    <property type="term" value="F:pyruvate dehydrogenase (acetyl-transferring) kinase activity"/>
    <property type="evidence" value="ECO:0000250"/>
    <property type="project" value="UniProtKB"/>
</dbReference>
<dbReference type="GO" id="GO:0071398">
    <property type="term" value="P:cellular response to fatty acid"/>
    <property type="evidence" value="ECO:0000315"/>
    <property type="project" value="UniProtKB"/>
</dbReference>
<dbReference type="GO" id="GO:0009267">
    <property type="term" value="P:cellular response to starvation"/>
    <property type="evidence" value="ECO:0000314"/>
    <property type="project" value="UniProtKB"/>
</dbReference>
<dbReference type="GO" id="GO:0042593">
    <property type="term" value="P:glucose homeostasis"/>
    <property type="evidence" value="ECO:0000250"/>
    <property type="project" value="UniProtKB"/>
</dbReference>
<dbReference type="GO" id="GO:0008286">
    <property type="term" value="P:insulin receptor signaling pathway"/>
    <property type="evidence" value="ECO:0000315"/>
    <property type="project" value="UniProtKB"/>
</dbReference>
<dbReference type="GO" id="GO:2000811">
    <property type="term" value="P:negative regulation of anoikis"/>
    <property type="evidence" value="ECO:0000315"/>
    <property type="project" value="UniProtKB"/>
</dbReference>
<dbReference type="GO" id="GO:0072593">
    <property type="term" value="P:reactive oxygen species metabolic process"/>
    <property type="evidence" value="ECO:0000315"/>
    <property type="project" value="UniProtKB"/>
</dbReference>
<dbReference type="GO" id="GO:0010510">
    <property type="term" value="P:regulation of acetyl-CoA biosynthetic process from pyruvate"/>
    <property type="evidence" value="ECO:0000315"/>
    <property type="project" value="UniProtKB"/>
</dbReference>
<dbReference type="GO" id="GO:0045124">
    <property type="term" value="P:regulation of bone resorption"/>
    <property type="evidence" value="ECO:0007669"/>
    <property type="project" value="Ensembl"/>
</dbReference>
<dbReference type="GO" id="GO:0042304">
    <property type="term" value="P:regulation of fatty acid biosynthetic process"/>
    <property type="evidence" value="ECO:0000315"/>
    <property type="project" value="UniProtKB"/>
</dbReference>
<dbReference type="GO" id="GO:0046320">
    <property type="term" value="P:regulation of fatty acid oxidation"/>
    <property type="evidence" value="ECO:0000250"/>
    <property type="project" value="UniProtKB"/>
</dbReference>
<dbReference type="GO" id="GO:0010906">
    <property type="term" value="P:regulation of glucose metabolic process"/>
    <property type="evidence" value="ECO:0000315"/>
    <property type="project" value="UniProtKB"/>
</dbReference>
<dbReference type="GO" id="GO:0010565">
    <property type="term" value="P:regulation of ketone metabolic process"/>
    <property type="evidence" value="ECO:0000250"/>
    <property type="project" value="UniProtKB"/>
</dbReference>
<dbReference type="GO" id="GO:0006885">
    <property type="term" value="P:regulation of pH"/>
    <property type="evidence" value="ECO:0000250"/>
    <property type="project" value="UniProtKB"/>
</dbReference>
<dbReference type="GO" id="GO:0042594">
    <property type="term" value="P:response to starvation"/>
    <property type="evidence" value="ECO:0000250"/>
    <property type="project" value="UniProtKB"/>
</dbReference>
<dbReference type="CDD" id="cd16929">
    <property type="entry name" value="HATPase_PDK-like"/>
    <property type="match status" value="1"/>
</dbReference>
<dbReference type="FunFam" id="1.20.140.20:FF:000001">
    <property type="entry name" value="[Pyruvate dehydrogenase (acetyl-transferring)] kinase isozyme 2, mitochondrial"/>
    <property type="match status" value="1"/>
</dbReference>
<dbReference type="FunFam" id="3.30.565.10:FF:000007">
    <property type="entry name" value="Mitochondrial pyruvate dehydrogenase kinase isoform 2"/>
    <property type="match status" value="1"/>
</dbReference>
<dbReference type="Gene3D" id="1.20.140.20">
    <property type="entry name" value="Alpha-ketoacid/pyruvate dehydrogenase kinase, N-terminal domain"/>
    <property type="match status" value="1"/>
</dbReference>
<dbReference type="Gene3D" id="3.30.565.10">
    <property type="entry name" value="Histidine kinase-like ATPase, C-terminal domain"/>
    <property type="match status" value="1"/>
</dbReference>
<dbReference type="InterPro" id="IPR036784">
    <property type="entry name" value="AK/P_DHK_N_sf"/>
</dbReference>
<dbReference type="InterPro" id="IPR018955">
    <property type="entry name" value="BCDHK/PDK_N"/>
</dbReference>
<dbReference type="InterPro" id="IPR039028">
    <property type="entry name" value="BCKD/PDK"/>
</dbReference>
<dbReference type="InterPro" id="IPR036890">
    <property type="entry name" value="HATPase_C_sf"/>
</dbReference>
<dbReference type="InterPro" id="IPR005467">
    <property type="entry name" value="His_kinase_dom"/>
</dbReference>
<dbReference type="PANTHER" id="PTHR11947:SF22">
    <property type="entry name" value="[PYRUVATE DEHYDROGENASE (ACETYL-TRANSFERRING)] KINASE ISOZYME 4, MITOCHONDRIAL"/>
    <property type="match status" value="1"/>
</dbReference>
<dbReference type="PANTHER" id="PTHR11947">
    <property type="entry name" value="PYRUVATE DEHYDROGENASE KINASE"/>
    <property type="match status" value="1"/>
</dbReference>
<dbReference type="Pfam" id="PF10436">
    <property type="entry name" value="BCDHK_Adom3"/>
    <property type="match status" value="1"/>
</dbReference>
<dbReference type="Pfam" id="PF02518">
    <property type="entry name" value="HATPase_c"/>
    <property type="match status" value="1"/>
</dbReference>
<dbReference type="SMART" id="SM00387">
    <property type="entry name" value="HATPase_c"/>
    <property type="match status" value="1"/>
</dbReference>
<dbReference type="SUPFAM" id="SSF69012">
    <property type="entry name" value="alpha-ketoacid dehydrogenase kinase, N-terminal domain"/>
    <property type="match status" value="1"/>
</dbReference>
<dbReference type="SUPFAM" id="SSF55874">
    <property type="entry name" value="ATPase domain of HSP90 chaperone/DNA topoisomerase II/histidine kinase"/>
    <property type="match status" value="1"/>
</dbReference>
<dbReference type="PROSITE" id="PS50109">
    <property type="entry name" value="HIS_KIN"/>
    <property type="match status" value="1"/>
</dbReference>
<comment type="function">
    <text evidence="4 7 9 10">Kinase that plays a key role in regulation of glucose and fatty acid metabolism and homeostasis via phosphorylation of the pyruvate dehydrogenase subunits PDHA1 and PDHA2. This inhibits pyruvate dehydrogenase activity, and thereby regulates metabolite flux through the tricarboxylic acid cycle, down-regulates aerobic respiration and inhibits the formation of acetyl-coenzyme A from pyruvate. Inhibition of pyruvate dehydrogenase decreases glucose utilization and increases fat metabolism in response to prolonged fasting and starvation. Plays an important role in maintaining normal blood glucose levels under starvation, and is involved in the insulin signaling cascade. Via its regulation of pyruvate dehydrogenase activity, plays an important role in maintaining normal blood pH and in preventing the accumulation of ketone bodies under starvation. In the fed state, mediates cellular responses to glucose levels and to a high-fat diet. Regulates both fatty acid oxidation and de novo fatty acid biosynthesis. Plays a role in the generation of reactive oxygen species. Protects detached epithelial cells against anoikis. Plays a role in cell proliferation via its role in regulating carbohydrate and fatty acid metabolism.</text>
</comment>
<comment type="catalytic activity">
    <reaction evidence="11">
        <text>L-seryl-[pyruvate dehydrogenase E1 alpha subunit] + ATP = O-phospho-L-seryl-[pyruvate dehydrogenase E1 alpha subunit] + ADP + H(+)</text>
        <dbReference type="Rhea" id="RHEA:23052"/>
        <dbReference type="Rhea" id="RHEA-COMP:13689"/>
        <dbReference type="Rhea" id="RHEA-COMP:13690"/>
        <dbReference type="ChEBI" id="CHEBI:15378"/>
        <dbReference type="ChEBI" id="CHEBI:29999"/>
        <dbReference type="ChEBI" id="CHEBI:30616"/>
        <dbReference type="ChEBI" id="CHEBI:83421"/>
        <dbReference type="ChEBI" id="CHEBI:456216"/>
        <dbReference type="EC" id="2.7.11.2"/>
    </reaction>
</comment>
<comment type="subunit">
    <text evidence="7 11">Homodimer. Interacts with the pyruvate dehydrogenase complex subunit DLAT, and is part of the multimeric pyruvate dehydrogenase complex that contains multiple copies of pyruvate dehydrogenase (E1), dihydrolipoamide acetyltransferase (DLAT, E2) and lipoamide dehydrogenase (DLD, E3).</text>
</comment>
<comment type="interaction">
    <interactant intactId="EBI-2861674">
        <id>Q16654</id>
    </interactant>
    <interactant intactId="EBI-742388">
        <id>Q9H8W4</id>
        <label>PLEKHF2</label>
    </interactant>
    <organismsDiffer>false</organismsDiffer>
    <experiments>3</experiments>
</comment>
<comment type="subcellular location">
    <subcellularLocation>
        <location>Mitochondrion matrix</location>
    </subcellularLocation>
</comment>
<comment type="tissue specificity">
    <text evidence="3 9">Ubiquitous; highest levels of expression in heart and skeletal muscle.</text>
</comment>
<comment type="induction">
    <text evidence="3 4 6 8 9">Up-regulated by prolonged fasting, in glucose-deprived cells and in response to a high-fat diet. Down-regulated by insulin. Up-regulated by PPARD.</text>
</comment>
<comment type="similarity">
    <text evidence="12">Belongs to the PDK/BCKDK protein kinase family.</text>
</comment>